<name>FUT8_BOVIN</name>
<sequence>MRPWTGSWRWIMLILFAWGTLLFYIGGHLVRDNDHPDHSSRELSKILAKLERLKQQNEDLRRMAESLRIPEGPIDQGPASGRIRALEEQLVKAKEQIENYKKQTRNGLGKDHEILRRRIENGAKELWFFLQSELKKLKNLEGNELQRHADEFLSDLGHHERSIMTDLYYLSQTDGAGDWREKEAKDLTELVQRRITYLQNPKDCSKAKKLVCNINKGCGYGCQLHHVVYCFMIAYGTQRTLILESHNWRYATGGWETVFRPVSETCTDRSGVYTGHWSGEIKDKNVQVVELPIVDSLHPRPPYLPLAVPEDLADRLVRVHGDPAVWWVSQFVKYLIRPQPWLEKEIEEATKKLGFKHPVIGVHVRRTDKVGTEAAFHPIEEYMVHVEEHFQLLARRMQVDKKRVYLATDDPSLLKEAKTKYPHYEFISDNSISWSAGLHNRYTENSLRGVILDIHFLSQADFLVCTFSSQVCRVAYEIMQTLHPDASANFHSLDDIYYFGGQNAHNQIAIYPHEPRTADEIPMEPGDIIGVAGNHWDGYSKGVNRKLGRTGLYPSYKVREKIETVKVPHVPEAEK</sequence>
<gene>
    <name type="primary">FUT8</name>
</gene>
<dbReference type="EC" id="2.4.1.68"/>
<dbReference type="EMBL" id="AF247186">
    <property type="protein sequence ID" value="AAF65460.1"/>
    <property type="molecule type" value="mRNA"/>
</dbReference>
<dbReference type="SMR" id="Q9N0W2"/>
<dbReference type="FunCoup" id="Q9N0W2">
    <property type="interactions" value="563"/>
</dbReference>
<dbReference type="STRING" id="9913.ENSBTAP00000026406"/>
<dbReference type="CAZy" id="GT23">
    <property type="family name" value="Glycosyltransferase Family 23"/>
</dbReference>
<dbReference type="PaxDb" id="9913-ENSBTAP00000026406"/>
<dbReference type="eggNOG" id="KOG3705">
    <property type="taxonomic scope" value="Eukaryota"/>
</dbReference>
<dbReference type="InParanoid" id="Q9N0W2"/>
<dbReference type="OrthoDB" id="2014825at2759"/>
<dbReference type="UniPathway" id="UPA00378"/>
<dbReference type="Proteomes" id="UP000009136">
    <property type="component" value="Unplaced"/>
</dbReference>
<dbReference type="GO" id="GO:0032580">
    <property type="term" value="C:Golgi cisterna membrane"/>
    <property type="evidence" value="ECO:0007669"/>
    <property type="project" value="UniProtKB-SubCell"/>
</dbReference>
<dbReference type="GO" id="GO:0046921">
    <property type="term" value="F:alpha-(1-&gt;6)-fucosyltransferase activity"/>
    <property type="evidence" value="ECO:0000318"/>
    <property type="project" value="GO_Central"/>
</dbReference>
<dbReference type="GO" id="GO:0008424">
    <property type="term" value="F:glycoprotein 6-alpha-L-fucosyltransferase activity"/>
    <property type="evidence" value="ECO:0000250"/>
    <property type="project" value="UniProtKB"/>
</dbReference>
<dbReference type="GO" id="GO:0017124">
    <property type="term" value="F:SH3 domain binding"/>
    <property type="evidence" value="ECO:0007669"/>
    <property type="project" value="UniProtKB-KW"/>
</dbReference>
<dbReference type="GO" id="GO:0046368">
    <property type="term" value="P:GDP-L-fucose metabolic process"/>
    <property type="evidence" value="ECO:0000250"/>
    <property type="project" value="UniProtKB"/>
</dbReference>
<dbReference type="GO" id="GO:0036071">
    <property type="term" value="P:N-glycan fucosylation"/>
    <property type="evidence" value="ECO:0000318"/>
    <property type="project" value="GO_Central"/>
</dbReference>
<dbReference type="GO" id="GO:0006487">
    <property type="term" value="P:protein N-linked glycosylation"/>
    <property type="evidence" value="ECO:0000318"/>
    <property type="project" value="GO_Central"/>
</dbReference>
<dbReference type="GO" id="GO:0018279">
    <property type="term" value="P:protein N-linked glycosylation via asparagine"/>
    <property type="evidence" value="ECO:0000250"/>
    <property type="project" value="UniProtKB"/>
</dbReference>
<dbReference type="CDD" id="cd11300">
    <property type="entry name" value="Fut8_like"/>
    <property type="match status" value="1"/>
</dbReference>
<dbReference type="CDD" id="cd11792">
    <property type="entry name" value="SH3_Fut8"/>
    <property type="match status" value="1"/>
</dbReference>
<dbReference type="FunFam" id="1.10.287.1060:FF:000003">
    <property type="entry name" value="Alpha-(1,6)-fucosyltransferase"/>
    <property type="match status" value="1"/>
</dbReference>
<dbReference type="FunFam" id="2.30.30.40:FF:000070">
    <property type="entry name" value="Alpha-(1,6)-fucosyltransferase"/>
    <property type="match status" value="1"/>
</dbReference>
<dbReference type="FunFam" id="3.40.50.11350:FF:000001">
    <property type="entry name" value="Alpha-(1,6)-fucosyltransferase"/>
    <property type="match status" value="1"/>
</dbReference>
<dbReference type="Gene3D" id="3.40.50.11350">
    <property type="match status" value="1"/>
</dbReference>
<dbReference type="Gene3D" id="1.10.287.1060">
    <property type="entry name" value="ESAT-6-like"/>
    <property type="match status" value="1"/>
</dbReference>
<dbReference type="Gene3D" id="2.30.30.40">
    <property type="entry name" value="SH3 Domains"/>
    <property type="match status" value="1"/>
</dbReference>
<dbReference type="InterPro" id="IPR015827">
    <property type="entry name" value="Fut8"/>
</dbReference>
<dbReference type="InterPro" id="IPR045573">
    <property type="entry name" value="Fut8_N_cat"/>
</dbReference>
<dbReference type="InterPro" id="IPR035653">
    <property type="entry name" value="Fut8_SH3"/>
</dbReference>
<dbReference type="InterPro" id="IPR027350">
    <property type="entry name" value="GT23_dom"/>
</dbReference>
<dbReference type="InterPro" id="IPR036028">
    <property type="entry name" value="SH3-like_dom_sf"/>
</dbReference>
<dbReference type="InterPro" id="IPR001452">
    <property type="entry name" value="SH3_domain"/>
</dbReference>
<dbReference type="PANTHER" id="PTHR13132">
    <property type="entry name" value="ALPHA- 1,6 -FUCOSYLTRANSFERASE"/>
    <property type="match status" value="1"/>
</dbReference>
<dbReference type="PANTHER" id="PTHR13132:SF29">
    <property type="entry name" value="ALPHA-(1,6)-FUCOSYLTRANSFERASE"/>
    <property type="match status" value="1"/>
</dbReference>
<dbReference type="Pfam" id="PF19745">
    <property type="entry name" value="FUT8_N_cat"/>
    <property type="match status" value="1"/>
</dbReference>
<dbReference type="Pfam" id="PF14604">
    <property type="entry name" value="SH3_9"/>
    <property type="match status" value="1"/>
</dbReference>
<dbReference type="PIRSF" id="PIRSF000472">
    <property type="entry name" value="Alpha1_6FUT_euk"/>
    <property type="match status" value="1"/>
</dbReference>
<dbReference type="SMART" id="SM00326">
    <property type="entry name" value="SH3"/>
    <property type="match status" value="1"/>
</dbReference>
<dbReference type="SUPFAM" id="SSF50044">
    <property type="entry name" value="SH3-domain"/>
    <property type="match status" value="1"/>
</dbReference>
<dbReference type="PROSITE" id="PS51659">
    <property type="entry name" value="GT23"/>
    <property type="match status" value="1"/>
</dbReference>
<dbReference type="PROSITE" id="PS50002">
    <property type="entry name" value="SH3"/>
    <property type="match status" value="1"/>
</dbReference>
<reference key="1">
    <citation type="journal article" date="2000" name="Mol. Biol. Evol.">
        <title>Ancestral exonic organization of FUT8, the gene encoding the alpha6-fucosyltransferase, reveals successive peptide domains which suggest a particular three-dimensional core structure for the alpha6-fucosyltransferase family.</title>
        <authorList>
            <person name="Javaud C."/>
            <person name="Dupuy F."/>
            <person name="Maftah A."/>
            <person name="Michalski J.-C."/>
            <person name="Oriol R."/>
            <person name="Petit J.-M."/>
            <person name="Julien R."/>
        </authorList>
    </citation>
    <scope>NUCLEOTIDE SEQUENCE [MRNA]</scope>
    <source>
        <tissue>Lung</tissue>
    </source>
</reference>
<comment type="function">
    <text evidence="1">Catalyzes the addition of fucose in alpha 1-6 linkage to the first GlcNAc residue, next to the peptide chains in N-glycans.</text>
</comment>
<comment type="catalytic activity">
    <reaction>
        <text>N(4)-{beta-D-GlcNAc-(1-&gt;2)-alpha-D-Man-(1-&gt;3)-[beta-D-GlcNAc-(1-&gt;2)-alpha-D-Man-(1-&gt;6)]-beta-D-Man-(1-&gt;4)-beta-D-GlcNAc-(1-&gt;4)-beta-D-GlcNAc}-L-asparaginyl-[protein] + GDP-beta-L-fucose = an N(4)-{beta-D-GlcNAc-(1-&gt;2)-alpha-D-Man-(1-&gt;3)-[beta-D-GlcNAc-(1-&gt;2)-alpha-D-Man-(1-&gt;6)]-beta-D-Man-(1-&gt;4)-beta-D-GlcNAc-(1-&gt;4)-[alpha-L-Fuc-(1-&gt;6)]-beta-D-GlcNAc}-L-asparaginyl-[protein] + GDP + H(+)</text>
        <dbReference type="Rhea" id="RHEA:12985"/>
        <dbReference type="Rhea" id="RHEA-COMP:13526"/>
        <dbReference type="Rhea" id="RHEA-COMP:13532"/>
        <dbReference type="ChEBI" id="CHEBI:15378"/>
        <dbReference type="ChEBI" id="CHEBI:57273"/>
        <dbReference type="ChEBI" id="CHEBI:58189"/>
        <dbReference type="ChEBI" id="CHEBI:60651"/>
        <dbReference type="ChEBI" id="CHEBI:137207"/>
        <dbReference type="EC" id="2.4.1.68"/>
    </reaction>
</comment>
<comment type="pathway">
    <text>Protein modification; protein glycosylation.</text>
</comment>
<comment type="subcellular location">
    <subcellularLocation>
        <location evidence="1">Golgi apparatus</location>
        <location evidence="1">Golgi stack membrane</location>
        <topology evidence="1">Single-pass type II membrane protein</topology>
    </subcellularLocation>
    <text evidence="1">Membrane-bound form in trans cisternae of Golgi.</text>
</comment>
<comment type="tissue specificity">
    <text>Highest expression found in brain. Also found in heart, lung, spleen and kidney.</text>
</comment>
<comment type="PTM">
    <text evidence="2">Tyrosine phosphorylated by PKDCC/VLK.</text>
</comment>
<comment type="similarity">
    <text evidence="6">Belongs to the glycosyltransferase 23 family.</text>
</comment>
<evidence type="ECO:0000250" key="1"/>
<evidence type="ECO:0000250" key="2">
    <source>
        <dbReference type="UniProtKB" id="Q9BYC5"/>
    </source>
</evidence>
<evidence type="ECO:0000250" key="3">
    <source>
        <dbReference type="UniProtKB" id="Q9WTS2"/>
    </source>
</evidence>
<evidence type="ECO:0000255" key="4"/>
<evidence type="ECO:0000255" key="5">
    <source>
        <dbReference type="PROSITE-ProRule" id="PRU00192"/>
    </source>
</evidence>
<evidence type="ECO:0000255" key="6">
    <source>
        <dbReference type="PROSITE-ProRule" id="PRU00992"/>
    </source>
</evidence>
<proteinExistence type="evidence at transcript level"/>
<organism>
    <name type="scientific">Bos taurus</name>
    <name type="common">Bovine</name>
    <dbReference type="NCBI Taxonomy" id="9913"/>
    <lineage>
        <taxon>Eukaryota</taxon>
        <taxon>Metazoa</taxon>
        <taxon>Chordata</taxon>
        <taxon>Craniata</taxon>
        <taxon>Vertebrata</taxon>
        <taxon>Euteleostomi</taxon>
        <taxon>Mammalia</taxon>
        <taxon>Eutheria</taxon>
        <taxon>Laurasiatheria</taxon>
        <taxon>Artiodactyla</taxon>
        <taxon>Ruminantia</taxon>
        <taxon>Pecora</taxon>
        <taxon>Bovidae</taxon>
        <taxon>Bovinae</taxon>
        <taxon>Bos</taxon>
    </lineage>
</organism>
<keyword id="KW-1015">Disulfide bond</keyword>
<keyword id="KW-0328">Glycosyltransferase</keyword>
<keyword id="KW-0333">Golgi apparatus</keyword>
<keyword id="KW-0472">Membrane</keyword>
<keyword id="KW-0597">Phosphoprotein</keyword>
<keyword id="KW-1185">Reference proteome</keyword>
<keyword id="KW-0728">SH3 domain</keyword>
<keyword id="KW-0729">SH3-binding</keyword>
<keyword id="KW-0735">Signal-anchor</keyword>
<keyword id="KW-0808">Transferase</keyword>
<keyword id="KW-0812">Transmembrane</keyword>
<keyword id="KW-1133">Transmembrane helix</keyword>
<protein>
    <recommendedName>
        <fullName>Alpha-(1,6)-fucosyltransferase</fullName>
        <shortName>Alpha1-6FucT</shortName>
        <ecNumber>2.4.1.68</ecNumber>
    </recommendedName>
    <alternativeName>
        <fullName>Fucosyltransferase 8</fullName>
    </alternativeName>
    <alternativeName>
        <fullName>GDP-L-Fuc:N-acetyl-beta-D-glucosaminide alpha1,6-fucosyltransferase</fullName>
    </alternativeName>
    <alternativeName>
        <fullName>GDP-fucose--glycoprotein fucosyltransferase</fullName>
    </alternativeName>
    <alternativeName>
        <fullName>Glycoprotein 6-alpha-L-fucosyltransferase</fullName>
    </alternativeName>
</protein>
<feature type="chain" id="PRO_0000080525" description="Alpha-(1,6)-fucosyltransferase">
    <location>
        <begin position="1"/>
        <end position="575"/>
    </location>
</feature>
<feature type="topological domain" description="Cytoplasmic" evidence="4">
    <location>
        <begin position="1"/>
        <end position="9"/>
    </location>
</feature>
<feature type="transmembrane region" description="Helical; Signal-anchor for type II membrane protein" evidence="4">
    <location>
        <begin position="10"/>
        <end position="30"/>
    </location>
</feature>
<feature type="topological domain" description="Lumenal" evidence="4">
    <location>
        <begin position="31"/>
        <end position="575"/>
    </location>
</feature>
<feature type="domain" description="GT23" evidence="6">
    <location>
        <begin position="206"/>
        <end position="493"/>
    </location>
</feature>
<feature type="domain" description="SH3" evidence="5">
    <location>
        <begin position="502"/>
        <end position="563"/>
    </location>
</feature>
<feature type="region of interest" description="Important for donor substrate binding" evidence="6">
    <location>
        <begin position="365"/>
        <end position="366"/>
    </location>
</feature>
<feature type="short sequence motif" description="SH3-binding" evidence="4">
    <location>
        <begin position="299"/>
        <end position="305"/>
    </location>
</feature>
<feature type="modified residue" description="Phosphoserine" evidence="3">
    <location>
        <position position="278"/>
    </location>
</feature>
<feature type="disulfide bond" evidence="1">
    <location>
        <begin position="204"/>
        <end position="266"/>
    </location>
</feature>
<feature type="disulfide bond" evidence="1">
    <location>
        <begin position="212"/>
        <end position="230"/>
    </location>
</feature>
<feature type="disulfide bond" evidence="1">
    <location>
        <begin position="218"/>
        <end position="222"/>
    </location>
</feature>
<feature type="disulfide bond" evidence="1">
    <location>
        <begin position="465"/>
        <end position="472"/>
    </location>
</feature>
<accession>Q9N0W2</accession>